<gene>
    <name evidence="1" type="primary">Pura</name>
</gene>
<accession>P86252</accession>
<dbReference type="SMR" id="P86252"/>
<dbReference type="FunCoup" id="P86252">
    <property type="interactions" value="40"/>
</dbReference>
<dbReference type="IntAct" id="P86252">
    <property type="interactions" value="3"/>
</dbReference>
<dbReference type="MINT" id="P86252"/>
<dbReference type="iPTMnet" id="P86252"/>
<dbReference type="SwissPalm" id="P86252"/>
<dbReference type="jPOST" id="P86252"/>
<dbReference type="UCSC" id="RGD:1308543">
    <property type="organism name" value="rat"/>
</dbReference>
<dbReference type="AGR" id="RGD:1308543"/>
<dbReference type="RGD" id="1308543">
    <property type="gene designation" value="Pura"/>
</dbReference>
<dbReference type="InParanoid" id="P86252"/>
<dbReference type="PhylomeDB" id="P86252"/>
<dbReference type="Proteomes" id="UP000002494">
    <property type="component" value="Unplaced"/>
</dbReference>
<dbReference type="GO" id="GO:0005737">
    <property type="term" value="C:cytoplasm"/>
    <property type="evidence" value="ECO:0000266"/>
    <property type="project" value="RGD"/>
</dbReference>
<dbReference type="GO" id="GO:0030425">
    <property type="term" value="C:dendrite"/>
    <property type="evidence" value="ECO:0000266"/>
    <property type="project" value="RGD"/>
</dbReference>
<dbReference type="GO" id="GO:0098978">
    <property type="term" value="C:glutamatergic synapse"/>
    <property type="evidence" value="ECO:0000266"/>
    <property type="project" value="RGD"/>
</dbReference>
<dbReference type="GO" id="GO:0043025">
    <property type="term" value="C:neuronal cell body"/>
    <property type="evidence" value="ECO:0000266"/>
    <property type="project" value="RGD"/>
</dbReference>
<dbReference type="GO" id="GO:0005634">
    <property type="term" value="C:nucleus"/>
    <property type="evidence" value="ECO:0000266"/>
    <property type="project" value="RGD"/>
</dbReference>
<dbReference type="GO" id="GO:0098794">
    <property type="term" value="C:postsynapse"/>
    <property type="evidence" value="ECO:0000266"/>
    <property type="project" value="RGD"/>
</dbReference>
<dbReference type="GO" id="GO:0014069">
    <property type="term" value="C:postsynaptic density"/>
    <property type="evidence" value="ECO:0000314"/>
    <property type="project" value="SynGO"/>
</dbReference>
<dbReference type="GO" id="GO:0003677">
    <property type="term" value="F:DNA binding"/>
    <property type="evidence" value="ECO:0000266"/>
    <property type="project" value="RGD"/>
</dbReference>
<dbReference type="GO" id="GO:0003700">
    <property type="term" value="F:DNA-binding transcription factor activity"/>
    <property type="evidence" value="ECO:0000266"/>
    <property type="project" value="RGD"/>
</dbReference>
<dbReference type="GO" id="GO:0140297">
    <property type="term" value="F:DNA-binding transcription factor binding"/>
    <property type="evidence" value="ECO:0000266"/>
    <property type="project" value="RGD"/>
</dbReference>
<dbReference type="GO" id="GO:0001227">
    <property type="term" value="F:DNA-binding transcription repressor activity, RNA polymerase II-specific"/>
    <property type="evidence" value="ECO:0000266"/>
    <property type="project" value="RGD"/>
</dbReference>
<dbReference type="GO" id="GO:0003690">
    <property type="term" value="F:double-stranded DNA binding"/>
    <property type="evidence" value="ECO:0000266"/>
    <property type="project" value="RGD"/>
</dbReference>
<dbReference type="GO" id="GO:0003691">
    <property type="term" value="F:double-stranded telomeric DNA binding"/>
    <property type="evidence" value="ECO:0000266"/>
    <property type="project" value="RGD"/>
</dbReference>
<dbReference type="GO" id="GO:0000900">
    <property type="term" value="F:mRNA regulatory element binding translation repressor activity"/>
    <property type="evidence" value="ECO:0000266"/>
    <property type="project" value="RGD"/>
</dbReference>
<dbReference type="GO" id="GO:0032422">
    <property type="term" value="F:purine-rich negative regulatory element binding"/>
    <property type="evidence" value="ECO:0000266"/>
    <property type="project" value="RGD"/>
</dbReference>
<dbReference type="GO" id="GO:0000977">
    <property type="term" value="F:RNA polymerase II transcription regulatory region sequence-specific DNA binding"/>
    <property type="evidence" value="ECO:0007669"/>
    <property type="project" value="InterPro"/>
</dbReference>
<dbReference type="GO" id="GO:0003697">
    <property type="term" value="F:single-stranded DNA binding"/>
    <property type="evidence" value="ECO:0000266"/>
    <property type="project" value="RGD"/>
</dbReference>
<dbReference type="GO" id="GO:0046332">
    <property type="term" value="F:SMAD binding"/>
    <property type="evidence" value="ECO:0000266"/>
    <property type="project" value="RGD"/>
</dbReference>
<dbReference type="GO" id="GO:0140416">
    <property type="term" value="F:transcription regulator inhibitor activity"/>
    <property type="evidence" value="ECO:0000266"/>
    <property type="project" value="RGD"/>
</dbReference>
<dbReference type="GO" id="GO:0008283">
    <property type="term" value="P:cell population proliferation"/>
    <property type="evidence" value="ECO:0000266"/>
    <property type="project" value="RGD"/>
</dbReference>
<dbReference type="GO" id="GO:0098963">
    <property type="term" value="P:dendritic transport of messenger ribonucleoprotein complex"/>
    <property type="evidence" value="ECO:0000266"/>
    <property type="project" value="RGD"/>
</dbReference>
<dbReference type="GO" id="GO:0050673">
    <property type="term" value="P:epithelial cell proliferation"/>
    <property type="evidence" value="ECO:0000266"/>
    <property type="project" value="RGD"/>
</dbReference>
<dbReference type="GO" id="GO:0046651">
    <property type="term" value="P:lymphocyte proliferation"/>
    <property type="evidence" value="ECO:0000266"/>
    <property type="project" value="RGD"/>
</dbReference>
<dbReference type="GO" id="GO:0045892">
    <property type="term" value="P:negative regulation of DNA-templated transcription"/>
    <property type="evidence" value="ECO:0000266"/>
    <property type="project" value="RGD"/>
</dbReference>
<dbReference type="GO" id="GO:0000122">
    <property type="term" value="P:negative regulation of transcription by RNA polymerase II"/>
    <property type="evidence" value="ECO:0000250"/>
    <property type="project" value="UniProtKB"/>
</dbReference>
<dbReference type="GO" id="GO:0007399">
    <property type="term" value="P:nervous system development"/>
    <property type="evidence" value="ECO:0000266"/>
    <property type="project" value="RGD"/>
</dbReference>
<dbReference type="GO" id="GO:0008284">
    <property type="term" value="P:positive regulation of cell population proliferation"/>
    <property type="evidence" value="ECO:0000266"/>
    <property type="project" value="RGD"/>
</dbReference>
<dbReference type="Gene3D" id="3.30.2450.30">
    <property type="match status" value="1"/>
</dbReference>
<dbReference type="InterPro" id="IPR006628">
    <property type="entry name" value="PUR-bd_fam"/>
</dbReference>
<dbReference type="PANTHER" id="PTHR12611">
    <property type="entry name" value="PUR-TRANSCRIPTIONAL ACTIVATOR"/>
    <property type="match status" value="1"/>
</dbReference>
<dbReference type="PANTHER" id="PTHR12611:SF2">
    <property type="entry name" value="TRANSCRIPTIONAL ACTIVATOR PROTEIN PUR-ALPHA"/>
    <property type="match status" value="1"/>
</dbReference>
<dbReference type="Pfam" id="PF04845">
    <property type="entry name" value="PurA"/>
    <property type="match status" value="1"/>
</dbReference>
<sequence length="138" mass="15322">FLKIAEVGAGGNKLTLSMSVAVEFRDYLGDFIEHYAQLGPSQPPDLAQAQDEPRYYMDLKENQRGPGLGSTQGQTIALPAQGLIEFRLIDDYGVEEEPAELPEGTSLTVDNKRFFFDVGSNKVSEVKPTYRFGHTFCK</sequence>
<comment type="function">
    <text evidence="1">This is a probable transcription activator that specifically binds the purine-rich single strand of the PUR element located upstream of the c-Myc gene. May play a role in the initiation of DNA replication and in recombination (By similarity).</text>
</comment>
<comment type="subunit">
    <text evidence="1">Homodimer, heterodimer with PURB and heterotrimer with PURB and YBX1/Y-box protein 1. Interacts with FMR1; this interaction occurs in association with polyribosome.</text>
</comment>
<comment type="subcellular location">
    <subcellularLocation>
        <location evidence="1">Nucleus</location>
    </subcellularLocation>
</comment>
<comment type="similarity">
    <text evidence="2">Belongs to the PUR DNA-binding protein family.</text>
</comment>
<reference evidence="3" key="1">
    <citation type="submission" date="2009-03" db="UniProtKB">
        <authorList>
            <person name="Maurya D.K."/>
            <person name="Bhargava P."/>
        </authorList>
    </citation>
    <scope>PROTEIN SEQUENCE</scope>
    <source>
        <strain>Wistar</strain>
        <tissue>Cerebellum</tissue>
    </source>
</reference>
<reference key="2">
    <citation type="journal article" date="2012" name="Nat. Commun.">
        <title>Quantitative maps of protein phosphorylation sites across 14 different rat organs and tissues.</title>
        <authorList>
            <person name="Lundby A."/>
            <person name="Secher A."/>
            <person name="Lage K."/>
            <person name="Nordsborg N.B."/>
            <person name="Dmytriyev A."/>
            <person name="Lundby C."/>
            <person name="Olsen J.V."/>
        </authorList>
    </citation>
    <scope>PHOSPHORYLATION [LARGE SCALE ANALYSIS] AT SER-70</scope>
    <scope>IDENTIFICATION BY MASS SPECTROMETRY [LARGE SCALE ANALYSIS]</scope>
</reference>
<feature type="chain" id="PRO_0000371243" description="Transcriptional activator protein Pur-alpha">
    <location>
        <begin position="1" status="less than"/>
        <end position="138" status="greater than"/>
    </location>
</feature>
<feature type="modified residue" description="Phosphoserine" evidence="4">
    <location>
        <position position="70"/>
    </location>
</feature>
<feature type="non-consecutive residues" evidence="3">
    <location>
        <begin position="13"/>
        <end position="14"/>
    </location>
</feature>
<feature type="non-consecutive residues" evidence="3">
    <location>
        <begin position="54"/>
        <end position="55"/>
    </location>
</feature>
<feature type="non-consecutive residues" evidence="3">
    <location>
        <begin position="64"/>
        <end position="65"/>
    </location>
</feature>
<feature type="non-consecutive residues" evidence="3">
    <location>
        <begin position="87"/>
        <end position="88"/>
    </location>
</feature>
<feature type="non-consecutive residues" evidence="3">
    <location>
        <begin position="122"/>
        <end position="123"/>
    </location>
</feature>
<feature type="non-consecutive residues" evidence="3">
    <location>
        <begin position="131"/>
        <end position="132"/>
    </location>
</feature>
<feature type="non-terminal residue">
    <location>
        <position position="1"/>
    </location>
</feature>
<feature type="non-terminal residue">
    <location>
        <position position="138"/>
    </location>
</feature>
<organism>
    <name type="scientific">Rattus norvegicus</name>
    <name type="common">Rat</name>
    <dbReference type="NCBI Taxonomy" id="10116"/>
    <lineage>
        <taxon>Eukaryota</taxon>
        <taxon>Metazoa</taxon>
        <taxon>Chordata</taxon>
        <taxon>Craniata</taxon>
        <taxon>Vertebrata</taxon>
        <taxon>Euteleostomi</taxon>
        <taxon>Mammalia</taxon>
        <taxon>Eutheria</taxon>
        <taxon>Euarchontoglires</taxon>
        <taxon>Glires</taxon>
        <taxon>Rodentia</taxon>
        <taxon>Myomorpha</taxon>
        <taxon>Muroidea</taxon>
        <taxon>Muridae</taxon>
        <taxon>Murinae</taxon>
        <taxon>Rattus</taxon>
    </lineage>
</organism>
<proteinExistence type="evidence at protein level"/>
<protein>
    <recommendedName>
        <fullName evidence="1">Transcriptional activator protein Pur-alpha</fullName>
    </recommendedName>
    <alternativeName>
        <fullName evidence="1">Purine-rich single-stranded DNA-binding protein alpha</fullName>
    </alternativeName>
</protein>
<name>PURA_RAT</name>
<keyword id="KW-0010">Activator</keyword>
<keyword id="KW-0903">Direct protein sequencing</keyword>
<keyword id="KW-0238">DNA-binding</keyword>
<keyword id="KW-0539">Nucleus</keyword>
<keyword id="KW-0597">Phosphoprotein</keyword>
<keyword id="KW-1185">Reference proteome</keyword>
<keyword id="KW-0804">Transcription</keyword>
<keyword id="KW-0805">Transcription regulation</keyword>
<evidence type="ECO:0000250" key="1">
    <source>
        <dbReference type="UniProtKB" id="P42669"/>
    </source>
</evidence>
<evidence type="ECO:0000255" key="2"/>
<evidence type="ECO:0000305" key="3"/>
<evidence type="ECO:0007744" key="4">
    <source>
    </source>
</evidence>